<sequence>MTLTVTVSLLSSPLHSVCTSAGARFTGFAGWELPLQFQGLMQEHLAVRERAGLFDISHMGKFQLRGSGLRAALQRLLPSDLTTLLPGQAQYSVLLNEAGGCLDDLIVYWQGIVDGVEQAFLIVNAATTDSDRLWLTEHLPPAIALLDLSQDLALVAIQGPQAIAFLQPLVSCDLAELPRFSHTVTSIAGQPAFVARTGYTGEDGCEVMLPPAAAITLWQQLTAAGVVPCGLGARDTLRLEAAMPLYGHELDTDTNPLEAGLGWVVHLDRNPDFLGRDRLVQAKTNGLERRLVGLELPGRNIARHGYPVAIADTTVGIVTSGSWSPTLSKAIALAYVPPALANLGQELWVEIRGKQVPATVVKRPFYRGSQFR</sequence>
<organism>
    <name type="scientific">Synechococcus sp. (strain ATCC 27144 / PCC 6301 / SAUG 1402/1)</name>
    <name type="common">Anacystis nidulans</name>
    <dbReference type="NCBI Taxonomy" id="269084"/>
    <lineage>
        <taxon>Bacteria</taxon>
        <taxon>Bacillati</taxon>
        <taxon>Cyanobacteriota</taxon>
        <taxon>Cyanophyceae</taxon>
        <taxon>Synechococcales</taxon>
        <taxon>Synechococcaceae</taxon>
        <taxon>Synechococcus</taxon>
    </lineage>
</organism>
<dbReference type="EC" id="2.1.2.10" evidence="1"/>
<dbReference type="EMBL" id="AP008231">
    <property type="protein sequence ID" value="BAD79984.1"/>
    <property type="molecule type" value="Genomic_DNA"/>
</dbReference>
<dbReference type="RefSeq" id="WP_011244104.1">
    <property type="nucleotide sequence ID" value="NZ_CP085785.1"/>
</dbReference>
<dbReference type="SMR" id="Q5N136"/>
<dbReference type="GeneID" id="72431194"/>
<dbReference type="KEGG" id="syc:syc1794_c"/>
<dbReference type="eggNOG" id="COG0404">
    <property type="taxonomic scope" value="Bacteria"/>
</dbReference>
<dbReference type="Proteomes" id="UP000001175">
    <property type="component" value="Chromosome"/>
</dbReference>
<dbReference type="GO" id="GO:0005829">
    <property type="term" value="C:cytosol"/>
    <property type="evidence" value="ECO:0007669"/>
    <property type="project" value="TreeGrafter"/>
</dbReference>
<dbReference type="GO" id="GO:0005960">
    <property type="term" value="C:glycine cleavage complex"/>
    <property type="evidence" value="ECO:0007669"/>
    <property type="project" value="InterPro"/>
</dbReference>
<dbReference type="GO" id="GO:0004047">
    <property type="term" value="F:aminomethyltransferase activity"/>
    <property type="evidence" value="ECO:0007669"/>
    <property type="project" value="UniProtKB-UniRule"/>
</dbReference>
<dbReference type="GO" id="GO:0008483">
    <property type="term" value="F:transaminase activity"/>
    <property type="evidence" value="ECO:0007669"/>
    <property type="project" value="UniProtKB-KW"/>
</dbReference>
<dbReference type="GO" id="GO:0019464">
    <property type="term" value="P:glycine decarboxylation via glycine cleavage system"/>
    <property type="evidence" value="ECO:0007669"/>
    <property type="project" value="UniProtKB-UniRule"/>
</dbReference>
<dbReference type="FunFam" id="2.40.30.110:FF:000003">
    <property type="entry name" value="Aminomethyltransferase"/>
    <property type="match status" value="1"/>
</dbReference>
<dbReference type="FunFam" id="4.10.1250.10:FF:000001">
    <property type="entry name" value="Aminomethyltransferase"/>
    <property type="match status" value="1"/>
</dbReference>
<dbReference type="Gene3D" id="2.40.30.110">
    <property type="entry name" value="Aminomethyltransferase beta-barrel domains"/>
    <property type="match status" value="1"/>
</dbReference>
<dbReference type="Gene3D" id="3.30.70.1400">
    <property type="entry name" value="Aminomethyltransferase beta-barrel domains"/>
    <property type="match status" value="1"/>
</dbReference>
<dbReference type="Gene3D" id="4.10.1250.10">
    <property type="entry name" value="Aminomethyltransferase fragment"/>
    <property type="match status" value="1"/>
</dbReference>
<dbReference type="Gene3D" id="3.30.1360.120">
    <property type="entry name" value="Probable tRNA modification gtpase trme, domain 1"/>
    <property type="match status" value="1"/>
</dbReference>
<dbReference type="HAMAP" id="MF_00259">
    <property type="entry name" value="GcvT"/>
    <property type="match status" value="1"/>
</dbReference>
<dbReference type="InterPro" id="IPR006223">
    <property type="entry name" value="GCS_T"/>
</dbReference>
<dbReference type="InterPro" id="IPR022903">
    <property type="entry name" value="GCS_T_bac"/>
</dbReference>
<dbReference type="InterPro" id="IPR013977">
    <property type="entry name" value="GCST_C"/>
</dbReference>
<dbReference type="InterPro" id="IPR006222">
    <property type="entry name" value="GCV_T_N"/>
</dbReference>
<dbReference type="InterPro" id="IPR028896">
    <property type="entry name" value="GcvT/YgfZ/DmdA"/>
</dbReference>
<dbReference type="InterPro" id="IPR029043">
    <property type="entry name" value="GcvT/YgfZ_C"/>
</dbReference>
<dbReference type="InterPro" id="IPR027266">
    <property type="entry name" value="TrmE/GcvT_dom1"/>
</dbReference>
<dbReference type="NCBIfam" id="TIGR00528">
    <property type="entry name" value="gcvT"/>
    <property type="match status" value="1"/>
</dbReference>
<dbReference type="NCBIfam" id="NF001567">
    <property type="entry name" value="PRK00389.1"/>
    <property type="match status" value="1"/>
</dbReference>
<dbReference type="PANTHER" id="PTHR43757">
    <property type="entry name" value="AMINOMETHYLTRANSFERASE"/>
    <property type="match status" value="1"/>
</dbReference>
<dbReference type="PANTHER" id="PTHR43757:SF2">
    <property type="entry name" value="AMINOMETHYLTRANSFERASE, MITOCHONDRIAL"/>
    <property type="match status" value="1"/>
</dbReference>
<dbReference type="Pfam" id="PF01571">
    <property type="entry name" value="GCV_T"/>
    <property type="match status" value="1"/>
</dbReference>
<dbReference type="Pfam" id="PF08669">
    <property type="entry name" value="GCV_T_C"/>
    <property type="match status" value="1"/>
</dbReference>
<dbReference type="PIRSF" id="PIRSF006487">
    <property type="entry name" value="GcvT"/>
    <property type="match status" value="1"/>
</dbReference>
<dbReference type="SUPFAM" id="SSF101790">
    <property type="entry name" value="Aminomethyltransferase beta-barrel domain"/>
    <property type="match status" value="1"/>
</dbReference>
<dbReference type="SUPFAM" id="SSF103025">
    <property type="entry name" value="Folate-binding domain"/>
    <property type="match status" value="1"/>
</dbReference>
<protein>
    <recommendedName>
        <fullName evidence="1">Aminomethyltransferase</fullName>
        <ecNumber evidence="1">2.1.2.10</ecNumber>
    </recommendedName>
    <alternativeName>
        <fullName evidence="1">Glycine cleavage system T protein</fullName>
    </alternativeName>
</protein>
<gene>
    <name evidence="1" type="primary">gcvT</name>
    <name type="ordered locus">syc1794_c</name>
</gene>
<accession>Q5N136</accession>
<reference key="1">
    <citation type="journal article" date="2007" name="Photosyn. Res.">
        <title>Complete nucleotide sequence of the freshwater unicellular cyanobacterium Synechococcus elongatus PCC 6301 chromosome: gene content and organization.</title>
        <authorList>
            <person name="Sugita C."/>
            <person name="Ogata K."/>
            <person name="Shikata M."/>
            <person name="Jikuya H."/>
            <person name="Takano J."/>
            <person name="Furumichi M."/>
            <person name="Kanehisa M."/>
            <person name="Omata T."/>
            <person name="Sugiura M."/>
            <person name="Sugita M."/>
        </authorList>
    </citation>
    <scope>NUCLEOTIDE SEQUENCE [LARGE SCALE GENOMIC DNA]</scope>
    <source>
        <strain>ATCC 27144 / PCC 6301 / SAUG 1402/1</strain>
    </source>
</reference>
<proteinExistence type="inferred from homology"/>
<comment type="function">
    <text evidence="1">The glycine cleavage system catalyzes the degradation of glycine.</text>
</comment>
<comment type="catalytic activity">
    <reaction evidence="1">
        <text>N(6)-[(R)-S(8)-aminomethyldihydrolipoyl]-L-lysyl-[protein] + (6S)-5,6,7,8-tetrahydrofolate = N(6)-[(R)-dihydrolipoyl]-L-lysyl-[protein] + (6R)-5,10-methylene-5,6,7,8-tetrahydrofolate + NH4(+)</text>
        <dbReference type="Rhea" id="RHEA:16945"/>
        <dbReference type="Rhea" id="RHEA-COMP:10475"/>
        <dbReference type="Rhea" id="RHEA-COMP:10492"/>
        <dbReference type="ChEBI" id="CHEBI:15636"/>
        <dbReference type="ChEBI" id="CHEBI:28938"/>
        <dbReference type="ChEBI" id="CHEBI:57453"/>
        <dbReference type="ChEBI" id="CHEBI:83100"/>
        <dbReference type="ChEBI" id="CHEBI:83143"/>
        <dbReference type="EC" id="2.1.2.10"/>
    </reaction>
</comment>
<comment type="subunit">
    <text evidence="1">The glycine cleavage system is composed of four proteins: P, T, L and H.</text>
</comment>
<comment type="similarity">
    <text evidence="1">Belongs to the GcvT family.</text>
</comment>
<keyword id="KW-0032">Aminotransferase</keyword>
<keyword id="KW-0808">Transferase</keyword>
<evidence type="ECO:0000255" key="1">
    <source>
        <dbReference type="HAMAP-Rule" id="MF_00259"/>
    </source>
</evidence>
<name>GCST_SYNP6</name>
<feature type="chain" id="PRO_0000122607" description="Aminomethyltransferase">
    <location>
        <begin position="1"/>
        <end position="372"/>
    </location>
</feature>